<evidence type="ECO:0000250" key="1"/>
<evidence type="ECO:0000305" key="2"/>
<accession>P9WH74</accession>
<accession>L0TD07</accession>
<accession>O53296</accession>
<accession>P0A5W8</accession>
<accession>P50640</accession>
<comment type="function">
    <text evidence="1">Provides the precursors necessary for DNA synthesis. Catalyzes the biosynthesis of deoxyribonucleotides from the corresponding ribonucleotides (By similarity).</text>
</comment>
<comment type="catalytic activity">
    <reaction>
        <text>a 2'-deoxyribonucleoside 5'-diphosphate + [thioredoxin]-disulfide + H2O = a ribonucleoside 5'-diphosphate + [thioredoxin]-dithiol</text>
        <dbReference type="Rhea" id="RHEA:23252"/>
        <dbReference type="Rhea" id="RHEA-COMP:10698"/>
        <dbReference type="Rhea" id="RHEA-COMP:10700"/>
        <dbReference type="ChEBI" id="CHEBI:15377"/>
        <dbReference type="ChEBI" id="CHEBI:29950"/>
        <dbReference type="ChEBI" id="CHEBI:50058"/>
        <dbReference type="ChEBI" id="CHEBI:57930"/>
        <dbReference type="ChEBI" id="CHEBI:73316"/>
        <dbReference type="EC" id="1.17.4.1"/>
    </reaction>
</comment>
<comment type="activity regulation">
    <text evidence="1">Under complex allosteric control mediated by deoxynucleoside triphosphates and ATP binding. The type of nucleotide bound at the specificity site determines substrate preference. It seems probable that ATP makes the enzyme reduce CDP and UDP, dGTP favors ADP reduction and dTTP favors GDP reduction (By similarity).</text>
</comment>
<comment type="subunit">
    <text evidence="1">Tetramer of two alpha and two beta subunits.</text>
</comment>
<comment type="similarity">
    <text evidence="2">Belongs to the ribonucleoside diphosphate reductase large chain family.</text>
</comment>
<reference key="1">
    <citation type="journal article" date="2002" name="J. Bacteriol.">
        <title>Whole-genome comparison of Mycobacterium tuberculosis clinical and laboratory strains.</title>
        <authorList>
            <person name="Fleischmann R.D."/>
            <person name="Alland D."/>
            <person name="Eisen J.A."/>
            <person name="Carpenter L."/>
            <person name="White O."/>
            <person name="Peterson J.D."/>
            <person name="DeBoy R.T."/>
            <person name="Dodson R.J."/>
            <person name="Gwinn M.L."/>
            <person name="Haft D.H."/>
            <person name="Hickey E.K."/>
            <person name="Kolonay J.F."/>
            <person name="Nelson W.C."/>
            <person name="Umayam L.A."/>
            <person name="Ermolaeva M.D."/>
            <person name="Salzberg S.L."/>
            <person name="Delcher A."/>
            <person name="Utterback T.R."/>
            <person name="Weidman J.F."/>
            <person name="Khouri H.M."/>
            <person name="Gill J."/>
            <person name="Mikula A."/>
            <person name="Bishai W."/>
            <person name="Jacobs W.R. Jr."/>
            <person name="Venter J.C."/>
            <person name="Fraser C.M."/>
        </authorList>
    </citation>
    <scope>NUCLEOTIDE SEQUENCE [LARGE SCALE GENOMIC DNA]</scope>
    <source>
        <strain>CDC 1551 / Oshkosh</strain>
    </source>
</reference>
<sequence>MPPTVIAEPVASGAHASYSGGPGETDYHALNAMLNLYDADGKIQFDKDREAAHQYFLQHVNQNTVFFHNQDEKLDYLIRENYYEREVLDQYSRNFVKTLLDRAYAKKFRFPTFLGAFKYYTSYTLKTFDGKRYLERFEDRVVMVALTLAAGDTALAELLVDEIIDGRFQPATPTFLNSGKKQRGEPVSCFLLRVEDNMESIGRSINSALQLSKRGGGVALLLTNIREHGAPIKNIENQSSGVIPIMKLLEDAFSYANQLGARQGAGAVYLHAHHPDIYRFLDTKRENADEKIRIKTLSLGVVIPDITFELAKRNDDMYLFSPYDVERVYGVPFADISVTEKYYEMVDDARIRKTKIKAREFFQTLAELQFESGYPYIMFEDTVNRANPIDGKITHSNLCSEILQVSTPSLFNEDLSYAKVGKDISCNLGSLNIAKTMDSPDFAQTIEVAIRALTAVSDQTHIKSVPSIEQGNNDSHAIGLGQMNLHGYLARERIFYGSDEGIDFTNIYFYTVLYHALRASNRIAIERGTHFKGFERSKYASGEFFDKYTDQIWEPKTQKVRQLFADAGIRIPTQDDWRRLKESVQAHGIYNQNLQAVPPTGSISYINHSTSSIHPIVSKVEIRKEGKIGRVYYPAPYMTNDNLEYYEDAYEIGYEKIIDTYAAATQHVDQGLSLTLFFKDTATTRDVNKAQIYAWRKGIKTLYYIRLRQMALEGTEVEGCVSCML</sequence>
<gene>
    <name type="primary">nrdE</name>
    <name type="ordered locus">MT3137</name>
</gene>
<name>RIR1_MYCTO</name>
<dbReference type="EC" id="1.17.4.1"/>
<dbReference type="EMBL" id="AE000516">
    <property type="protein sequence ID" value="AAK47468.1"/>
    <property type="molecule type" value="Genomic_DNA"/>
</dbReference>
<dbReference type="PIR" id="F70861">
    <property type="entry name" value="F70861"/>
</dbReference>
<dbReference type="RefSeq" id="WP_003914457.1">
    <property type="nucleotide sequence ID" value="NZ_KK341227.1"/>
</dbReference>
<dbReference type="SMR" id="P9WH74"/>
<dbReference type="KEGG" id="mtc:MT3137"/>
<dbReference type="HOGENOM" id="CLU_000404_4_1_11"/>
<dbReference type="Proteomes" id="UP000001020">
    <property type="component" value="Chromosome"/>
</dbReference>
<dbReference type="GO" id="GO:0005971">
    <property type="term" value="C:ribonucleoside-diphosphate reductase complex"/>
    <property type="evidence" value="ECO:0007669"/>
    <property type="project" value="TreeGrafter"/>
</dbReference>
<dbReference type="GO" id="GO:0005524">
    <property type="term" value="F:ATP binding"/>
    <property type="evidence" value="ECO:0007669"/>
    <property type="project" value="UniProtKB-KW"/>
</dbReference>
<dbReference type="GO" id="GO:0004748">
    <property type="term" value="F:ribonucleoside-diphosphate reductase activity, thioredoxin disulfide as acceptor"/>
    <property type="evidence" value="ECO:0007669"/>
    <property type="project" value="UniProtKB-EC"/>
</dbReference>
<dbReference type="GO" id="GO:0009263">
    <property type="term" value="P:deoxyribonucleotide biosynthetic process"/>
    <property type="evidence" value="ECO:0007669"/>
    <property type="project" value="UniProtKB-KW"/>
</dbReference>
<dbReference type="CDD" id="cd01679">
    <property type="entry name" value="RNR_I"/>
    <property type="match status" value="1"/>
</dbReference>
<dbReference type="FunFam" id="1.10.1650.20:FF:000002">
    <property type="entry name" value="Ribonucleoside-diphosphate reductase"/>
    <property type="match status" value="1"/>
</dbReference>
<dbReference type="Gene3D" id="1.10.1650.20">
    <property type="match status" value="1"/>
</dbReference>
<dbReference type="Gene3D" id="3.20.70.20">
    <property type="match status" value="1"/>
</dbReference>
<dbReference type="InterPro" id="IPR013346">
    <property type="entry name" value="NrdE_NrdA_C"/>
</dbReference>
<dbReference type="InterPro" id="IPR026459">
    <property type="entry name" value="RNR_1b_NrdE"/>
</dbReference>
<dbReference type="InterPro" id="IPR000788">
    <property type="entry name" value="RNR_lg_C"/>
</dbReference>
<dbReference type="InterPro" id="IPR013509">
    <property type="entry name" value="RNR_lsu_N"/>
</dbReference>
<dbReference type="InterPro" id="IPR013554">
    <property type="entry name" value="RNR_N"/>
</dbReference>
<dbReference type="InterPro" id="IPR008926">
    <property type="entry name" value="RNR_R1-su_N"/>
</dbReference>
<dbReference type="InterPro" id="IPR039718">
    <property type="entry name" value="Rrm1"/>
</dbReference>
<dbReference type="NCBIfam" id="TIGR02506">
    <property type="entry name" value="NrdE_NrdA"/>
    <property type="match status" value="1"/>
</dbReference>
<dbReference type="NCBIfam" id="TIGR04170">
    <property type="entry name" value="RNR_1b_NrdE"/>
    <property type="match status" value="1"/>
</dbReference>
<dbReference type="PANTHER" id="PTHR11573:SF30">
    <property type="entry name" value="RIBONUCLEOSIDE-DIPHOSPHATE REDUCTASE 2 SUBUNIT ALPHA"/>
    <property type="match status" value="1"/>
</dbReference>
<dbReference type="PANTHER" id="PTHR11573">
    <property type="entry name" value="RIBONUCLEOSIDE-DIPHOSPHATE REDUCTASE LARGE CHAIN"/>
    <property type="match status" value="1"/>
</dbReference>
<dbReference type="Pfam" id="PF02867">
    <property type="entry name" value="Ribonuc_red_lgC"/>
    <property type="match status" value="1"/>
</dbReference>
<dbReference type="Pfam" id="PF00317">
    <property type="entry name" value="Ribonuc_red_lgN"/>
    <property type="match status" value="1"/>
</dbReference>
<dbReference type="Pfam" id="PF08343">
    <property type="entry name" value="RNR_N"/>
    <property type="match status" value="1"/>
</dbReference>
<dbReference type="PRINTS" id="PR01183">
    <property type="entry name" value="RIBORDTASEM1"/>
</dbReference>
<dbReference type="SUPFAM" id="SSF51998">
    <property type="entry name" value="PFL-like glycyl radical enzymes"/>
    <property type="match status" value="1"/>
</dbReference>
<dbReference type="SUPFAM" id="SSF48168">
    <property type="entry name" value="R1 subunit of ribonucleotide reductase, N-terminal domain"/>
    <property type="match status" value="1"/>
</dbReference>
<dbReference type="PROSITE" id="PS00089">
    <property type="entry name" value="RIBORED_LARGE"/>
    <property type="match status" value="1"/>
</dbReference>
<organism>
    <name type="scientific">Mycobacterium tuberculosis (strain CDC 1551 / Oshkosh)</name>
    <dbReference type="NCBI Taxonomy" id="83331"/>
    <lineage>
        <taxon>Bacteria</taxon>
        <taxon>Bacillati</taxon>
        <taxon>Actinomycetota</taxon>
        <taxon>Actinomycetes</taxon>
        <taxon>Mycobacteriales</taxon>
        <taxon>Mycobacteriaceae</taxon>
        <taxon>Mycobacterium</taxon>
        <taxon>Mycobacterium tuberculosis complex</taxon>
    </lineage>
</organism>
<keyword id="KW-0021">Allosteric enzyme</keyword>
<keyword id="KW-0067">ATP-binding</keyword>
<keyword id="KW-0215">Deoxyribonucleotide synthesis</keyword>
<keyword id="KW-1015">Disulfide bond</keyword>
<keyword id="KW-0547">Nucleotide-binding</keyword>
<keyword id="KW-0560">Oxidoreductase</keyword>
<keyword id="KW-1185">Reference proteome</keyword>
<protein>
    <recommendedName>
        <fullName>Ribonucleoside-diphosphate reductase subunit alpha</fullName>
        <ecNumber>1.17.4.1</ecNumber>
    </recommendedName>
    <alternativeName>
        <fullName>Ribonucleotide reductase R1 subunit</fullName>
    </alternativeName>
</protein>
<proteinExistence type="inferred from homology"/>
<feature type="chain" id="PRO_0000428236" description="Ribonucleoside-diphosphate reductase subunit alpha">
    <location>
        <begin position="1"/>
        <end position="725"/>
    </location>
</feature>
<feature type="active site" description="Proton acceptor" evidence="1">
    <location>
        <position position="397"/>
    </location>
</feature>
<feature type="active site" description="Cysteine radical intermediate" evidence="1">
    <location>
        <position position="399"/>
    </location>
</feature>
<feature type="active site" description="Proton acceptor" evidence="1">
    <location>
        <position position="401"/>
    </location>
</feature>
<feature type="binding site" evidence="1">
    <location>
        <position position="172"/>
    </location>
    <ligand>
        <name>substrate</name>
    </ligand>
</feature>
<feature type="binding site" evidence="1">
    <location>
        <begin position="188"/>
        <end position="189"/>
    </location>
    <ligand>
        <name>substrate</name>
    </ligand>
</feature>
<feature type="binding site" evidence="1">
    <location>
        <position position="217"/>
    </location>
    <ligand>
        <name>substrate</name>
    </ligand>
</feature>
<feature type="binding site" evidence="1">
    <location>
        <begin position="397"/>
        <end position="401"/>
    </location>
    <ligand>
        <name>substrate</name>
    </ligand>
</feature>
<feature type="binding site" evidence="1">
    <location>
        <begin position="599"/>
        <end position="603"/>
    </location>
    <ligand>
        <name>substrate</name>
    </ligand>
</feature>
<feature type="site" description="Important for hydrogen atom transfer" evidence="1">
    <location>
        <position position="189"/>
    </location>
</feature>
<feature type="site" description="Allosteric effector binding" evidence="1">
    <location>
        <position position="196"/>
    </location>
</feature>
<feature type="site" description="Allosteric effector binding" evidence="1">
    <location>
        <position position="226"/>
    </location>
</feature>
<feature type="site" description="Important for hydrogen atom transfer" evidence="1">
    <location>
        <position position="426"/>
    </location>
</feature>
<feature type="site" description="Important for electron transfer" evidence="1">
    <location>
        <position position="703"/>
    </location>
</feature>
<feature type="site" description="Important for electron transfer" evidence="1">
    <location>
        <position position="704"/>
    </location>
</feature>
<feature type="site" description="Interacts with thioredoxin/glutaredoxin" evidence="1">
    <location>
        <position position="720"/>
    </location>
</feature>
<feature type="site" description="Interacts with thioredoxin/glutaredoxin" evidence="1">
    <location>
        <position position="723"/>
    </location>
</feature>
<feature type="disulfide bond" description="Redox-active" evidence="1">
    <location>
        <begin position="189"/>
        <end position="426"/>
    </location>
</feature>